<feature type="chain" id="PRO_1000144550" description="Large ribosomal subunit protein uL23">
    <location>
        <begin position="1"/>
        <end position="109"/>
    </location>
</feature>
<protein>
    <recommendedName>
        <fullName evidence="1">Large ribosomal subunit protein uL23</fullName>
    </recommendedName>
    <alternativeName>
        <fullName evidence="2">50S ribosomal protein L23</fullName>
    </alternativeName>
</protein>
<evidence type="ECO:0000255" key="1">
    <source>
        <dbReference type="HAMAP-Rule" id="MF_01369"/>
    </source>
</evidence>
<evidence type="ECO:0000305" key="2"/>
<accession>B3EP59</accession>
<sequence length="109" mass="12411">MRNPLLQPWLTEKSTRLTEQQGQYAFMVKAAADKTDIKRAIEEKFGVEVRSVRTANCLGKSKRQYTRKGLIAGKKNDWKKAVITLKQGQEINYYSGSTDQGEEKKSKKG</sequence>
<reference key="1">
    <citation type="submission" date="2008-06" db="EMBL/GenBank/DDBJ databases">
        <title>Complete sequence of Chlorobium phaeobacteroides BS1.</title>
        <authorList>
            <consortium name="US DOE Joint Genome Institute"/>
            <person name="Lucas S."/>
            <person name="Copeland A."/>
            <person name="Lapidus A."/>
            <person name="Glavina del Rio T."/>
            <person name="Dalin E."/>
            <person name="Tice H."/>
            <person name="Bruce D."/>
            <person name="Goodwin L."/>
            <person name="Pitluck S."/>
            <person name="Schmutz J."/>
            <person name="Larimer F."/>
            <person name="Land M."/>
            <person name="Hauser L."/>
            <person name="Kyrpides N."/>
            <person name="Ovchinnikova G."/>
            <person name="Li T."/>
            <person name="Liu Z."/>
            <person name="Zhao F."/>
            <person name="Overmann J."/>
            <person name="Bryant D.A."/>
            <person name="Richardson P."/>
        </authorList>
    </citation>
    <scope>NUCLEOTIDE SEQUENCE [LARGE SCALE GENOMIC DNA]</scope>
    <source>
        <strain>BS1</strain>
    </source>
</reference>
<proteinExistence type="inferred from homology"/>
<name>RL23_CHLPB</name>
<keyword id="KW-0687">Ribonucleoprotein</keyword>
<keyword id="KW-0689">Ribosomal protein</keyword>
<keyword id="KW-0694">RNA-binding</keyword>
<keyword id="KW-0699">rRNA-binding</keyword>
<gene>
    <name evidence="1" type="primary">rplW</name>
    <name type="ordered locus">Cphamn1_2294</name>
</gene>
<dbReference type="EMBL" id="CP001101">
    <property type="protein sequence ID" value="ACE05198.1"/>
    <property type="molecule type" value="Genomic_DNA"/>
</dbReference>
<dbReference type="SMR" id="B3EP59"/>
<dbReference type="STRING" id="331678.Cphamn1_2294"/>
<dbReference type="KEGG" id="cpb:Cphamn1_2294"/>
<dbReference type="eggNOG" id="COG0089">
    <property type="taxonomic scope" value="Bacteria"/>
</dbReference>
<dbReference type="HOGENOM" id="CLU_037562_3_1_10"/>
<dbReference type="OrthoDB" id="9797862at2"/>
<dbReference type="GO" id="GO:1990904">
    <property type="term" value="C:ribonucleoprotein complex"/>
    <property type="evidence" value="ECO:0007669"/>
    <property type="project" value="UniProtKB-KW"/>
</dbReference>
<dbReference type="GO" id="GO:0005840">
    <property type="term" value="C:ribosome"/>
    <property type="evidence" value="ECO:0007669"/>
    <property type="project" value="UniProtKB-KW"/>
</dbReference>
<dbReference type="GO" id="GO:0019843">
    <property type="term" value="F:rRNA binding"/>
    <property type="evidence" value="ECO:0007669"/>
    <property type="project" value="UniProtKB-UniRule"/>
</dbReference>
<dbReference type="GO" id="GO:0003735">
    <property type="term" value="F:structural constituent of ribosome"/>
    <property type="evidence" value="ECO:0007669"/>
    <property type="project" value="InterPro"/>
</dbReference>
<dbReference type="GO" id="GO:0006412">
    <property type="term" value="P:translation"/>
    <property type="evidence" value="ECO:0007669"/>
    <property type="project" value="UniProtKB-UniRule"/>
</dbReference>
<dbReference type="Gene3D" id="3.30.70.330">
    <property type="match status" value="1"/>
</dbReference>
<dbReference type="HAMAP" id="MF_01369_B">
    <property type="entry name" value="Ribosomal_uL23_B"/>
    <property type="match status" value="1"/>
</dbReference>
<dbReference type="InterPro" id="IPR012677">
    <property type="entry name" value="Nucleotide-bd_a/b_plait_sf"/>
</dbReference>
<dbReference type="InterPro" id="IPR013025">
    <property type="entry name" value="Ribosomal_uL23-like"/>
</dbReference>
<dbReference type="InterPro" id="IPR012678">
    <property type="entry name" value="Ribosomal_uL23/eL15/eS24_sf"/>
</dbReference>
<dbReference type="NCBIfam" id="NF004363">
    <property type="entry name" value="PRK05738.2-4"/>
    <property type="match status" value="1"/>
</dbReference>
<dbReference type="PANTHER" id="PTHR12059:SF5">
    <property type="entry name" value="LARGE RIBOSOMAL SUBUNIT PROTEIN UL23M"/>
    <property type="match status" value="1"/>
</dbReference>
<dbReference type="PANTHER" id="PTHR12059">
    <property type="entry name" value="RIBOSOMAL PROTEIN L23-RELATED"/>
    <property type="match status" value="1"/>
</dbReference>
<dbReference type="Pfam" id="PF00276">
    <property type="entry name" value="Ribosomal_L23"/>
    <property type="match status" value="1"/>
</dbReference>
<dbReference type="SUPFAM" id="SSF54189">
    <property type="entry name" value="Ribosomal proteins S24e, L23 and L15e"/>
    <property type="match status" value="1"/>
</dbReference>
<comment type="function">
    <text evidence="1">One of the early assembly proteins it binds 23S rRNA. One of the proteins that surrounds the polypeptide exit tunnel on the outside of the ribosome. Forms the main docking site for trigger factor binding to the ribosome.</text>
</comment>
<comment type="subunit">
    <text evidence="1">Part of the 50S ribosomal subunit. Contacts protein L29, and trigger factor when it is bound to the ribosome.</text>
</comment>
<comment type="similarity">
    <text evidence="1">Belongs to the universal ribosomal protein uL23 family.</text>
</comment>
<organism>
    <name type="scientific">Chlorobium phaeobacteroides (strain BS1)</name>
    <dbReference type="NCBI Taxonomy" id="331678"/>
    <lineage>
        <taxon>Bacteria</taxon>
        <taxon>Pseudomonadati</taxon>
        <taxon>Chlorobiota</taxon>
        <taxon>Chlorobiia</taxon>
        <taxon>Chlorobiales</taxon>
        <taxon>Chlorobiaceae</taxon>
        <taxon>Chlorobium/Pelodictyon group</taxon>
        <taxon>Chlorobium</taxon>
    </lineage>
</organism>